<sequence>MKREYQDAGGSGGGGGGMGSSEDKMMVSAAAGEGEEVDELLAALGYKVRASDMADVAQKLEQLEMAMGMGGVGAGAAPDDSFATHLATDTVHYNPTDLSSWVESMLSELNAPPPPLPPAPQLNASTSSTVTGSGGYFDLPPSVDSSSSIYALRPIPSPAGATAPADLSADSVRDPKRMRTGGSSTSSSSSSSSSLGGGARSSVVEAAPPVAAAANATPALPVVVVDTQEAGIRLVHALLACAEAVQQENLSAAEALVKQIPLLAASQGGAMRKVAAYFGEALARRVFRFRPQPDSSLLDAAFADLLHAHFYESCPYLKFAHFTANQAILEAFAGCRRVHVVDFGIKQGMQWPALLQALALRPGGPPSFRLTGVGPPQPDETDALQQVGWKLAQFAHTIRVDFQYRGLVAATLADLEPFMLQPEGEEDPNEEPEVIAVNSVFEMHRLLAQPGALEKVLGTVRAVRPRIVTVVEQEANHNSGTFLDRFTESLHYYSTMFDSLEGGSSGGGPSEVSSGAAAAPAAAGTDQVMSEVYLGRQICNVVACEGAERTERHETLGQWRNRLGNAGFETVHLGSNAYKQASTLLALFAGGDGYKVEEKEGCLTLGWHTRPLIATSAWRLAGP</sequence>
<feature type="chain" id="PRO_0000132249" description="DELLA protein RHT-1">
    <location>
        <begin position="1"/>
        <end position="623"/>
    </location>
</feature>
<feature type="domain" description="GRAS" evidence="2">
    <location>
        <begin position="225"/>
        <end position="619"/>
    </location>
</feature>
<feature type="region of interest" description="Disordered" evidence="3">
    <location>
        <begin position="1"/>
        <end position="27"/>
    </location>
</feature>
<feature type="region of interest" description="Disordered" evidence="3">
    <location>
        <begin position="109"/>
        <end position="138"/>
    </location>
</feature>
<feature type="region of interest" description="Disordered" evidence="3">
    <location>
        <begin position="159"/>
        <end position="201"/>
    </location>
</feature>
<feature type="region of interest" description="Leucine repeat I (LRI)" evidence="2">
    <location>
        <begin position="232"/>
        <end position="288"/>
    </location>
</feature>
<feature type="region of interest" description="VHIID" evidence="2">
    <location>
        <begin position="307"/>
        <end position="372"/>
    </location>
</feature>
<feature type="region of interest" description="Leucine repeat II (LRII)" evidence="2">
    <location>
        <begin position="386"/>
        <end position="425"/>
    </location>
</feature>
<feature type="region of interest" description="PFYRE" evidence="2">
    <location>
        <begin position="435"/>
        <end position="540"/>
    </location>
</feature>
<feature type="region of interest" description="SAW" evidence="2">
    <location>
        <begin position="543"/>
        <end position="619"/>
    </location>
</feature>
<feature type="short sequence motif" description="DELLA motif">
    <location>
        <begin position="38"/>
        <end position="42"/>
    </location>
</feature>
<feature type="short sequence motif" description="LxCxE motif" evidence="2">
    <location>
        <begin position="239"/>
        <end position="243"/>
    </location>
</feature>
<feature type="short sequence motif" description="VHIID" evidence="2">
    <location>
        <begin position="338"/>
        <end position="342"/>
    </location>
</feature>
<feature type="compositionally biased region" description="Gly residues" evidence="3">
    <location>
        <begin position="9"/>
        <end position="19"/>
    </location>
</feature>
<feature type="compositionally biased region" description="Pro residues" evidence="3">
    <location>
        <begin position="111"/>
        <end position="120"/>
    </location>
</feature>
<feature type="compositionally biased region" description="Low complexity" evidence="3">
    <location>
        <begin position="121"/>
        <end position="131"/>
    </location>
</feature>
<feature type="compositionally biased region" description="Low complexity" evidence="3">
    <location>
        <begin position="181"/>
        <end position="201"/>
    </location>
</feature>
<feature type="sequence variant" description="In strain: cv. Rht-D1b; induces a dwarf phenotype.">
    <location>
        <begin position="61"/>
        <end position="64"/>
    </location>
</feature>
<feature type="sequence variant" description="In strain: cv. Rht-B1b; induces a dwarf phenotype.">
    <location>
        <begin position="62"/>
        <end position="64"/>
    </location>
</feature>
<organism>
    <name type="scientific">Triticum aestivum</name>
    <name type="common">Wheat</name>
    <dbReference type="NCBI Taxonomy" id="4565"/>
    <lineage>
        <taxon>Eukaryota</taxon>
        <taxon>Viridiplantae</taxon>
        <taxon>Streptophyta</taxon>
        <taxon>Embryophyta</taxon>
        <taxon>Tracheophyta</taxon>
        <taxon>Spermatophyta</taxon>
        <taxon>Magnoliopsida</taxon>
        <taxon>Liliopsida</taxon>
        <taxon>Poales</taxon>
        <taxon>Poaceae</taxon>
        <taxon>BOP clade</taxon>
        <taxon>Pooideae</taxon>
        <taxon>Triticodae</taxon>
        <taxon>Triticeae</taxon>
        <taxon>Triticinae</taxon>
        <taxon>Triticum</taxon>
    </lineage>
</organism>
<name>RHT1_WHEAT</name>
<accession>Q9ST59</accession>
<reference key="1">
    <citation type="journal article" date="1999" name="Nature">
        <title>'Green revolution' genes encode mutant gibberellin response modulators.</title>
        <authorList>
            <person name="Peng J."/>
            <person name="Richards D.E."/>
            <person name="Hartley N.M."/>
            <person name="Murphy G.P."/>
            <person name="Devos K.M."/>
            <person name="Flintham J.E."/>
            <person name="Beales J."/>
            <person name="Fish L.J."/>
            <person name="Worland A.J."/>
            <person name="Pelica F."/>
            <person name="Sudhakar D."/>
            <person name="Christou P."/>
            <person name="Snape J.W."/>
            <person name="Gale M.D."/>
            <person name="Harberd N.P."/>
        </authorList>
    </citation>
    <scope>NUCLEOTIDE SEQUENCE [GENOMIC DNA]</scope>
    <scope>VARIANTS 61-GLN--GLU-64 DEL AND 62-GLN--GLU-64 DEL</scope>
    <source>
        <strain>cv. Rht-B1b</strain>
        <strain>cv. Rht-D1b</strain>
    </source>
</reference>
<keyword id="KW-0939">Gibberellin signaling pathway</keyword>
<keyword id="KW-0539">Nucleus</keyword>
<keyword id="KW-0597">Phosphoprotein</keyword>
<keyword id="KW-1185">Reference proteome</keyword>
<keyword id="KW-0678">Repressor</keyword>
<keyword id="KW-0804">Transcription</keyword>
<keyword id="KW-0805">Transcription regulation</keyword>
<keyword id="KW-0832">Ubl conjugation</keyword>
<comment type="function">
    <text>Probable transcriptional regulator that acts as a repressor of the gibberellin (GA) signaling pathway. Probably acts by participating in large multiprotein complexes that repress transcription of GA-inducible genes. Upon GA application, it is degraded by the proteasome, allowing the GA signaling pathway.</text>
</comment>
<comment type="subcellular location">
    <subcellularLocation>
        <location evidence="1">Nucleus</location>
    </subcellularLocation>
</comment>
<comment type="domain">
    <text evidence="4">The DELLA motif is required for its GA-induced degradation.</text>
</comment>
<comment type="PTM">
    <text evidence="1">Phosphorylated.</text>
</comment>
<comment type="PTM">
    <text evidence="4">Ubiquitinated. Upon GA application it is ubiquitinated, leading to its subsequent degradation (Probable).</text>
</comment>
<comment type="biotechnology">
    <text>This gene, also known as the 'green revolution gene' has been introduced by conventional breeding procedures into several cultivars. It produces shorter plants, increase grain yield at the expense of straw biomass, and are more resistant to damage by wind and rain. These wheats are short because they respond abnormally to GA.</text>
</comment>
<comment type="similarity">
    <text evidence="4">Belongs to the GRAS family. DELLA subfamily.</text>
</comment>
<comment type="online information" name="Protein Spotlight">
    <link uri="https://www.proteinspotlight.org/back_issues/070"/>
    <text>All things dwarfed and beautiful - Issue 70 of May 2006</text>
</comment>
<proteinExistence type="evidence at protein level"/>
<protein>
    <recommendedName>
        <fullName>DELLA protein RHT-1</fullName>
    </recommendedName>
    <alternativeName>
        <fullName>Protein Rht-B1/Rht-D1</fullName>
    </alternativeName>
    <alternativeName>
        <fullName>Reduced height protein 1</fullName>
    </alternativeName>
</protein>
<gene>
    <name type="primary">RHT1</name>
</gene>
<dbReference type="EMBL" id="AJ242531">
    <property type="protein sequence ID" value="CAB51555.1"/>
    <property type="molecule type" value="Genomic_DNA"/>
</dbReference>
<dbReference type="SMR" id="Q9ST59"/>
<dbReference type="STRING" id="4565.Q9ST59"/>
<dbReference type="PaxDb" id="4565-Traes_4BS_2EE4988CD.1"/>
<dbReference type="EnsemblPlants" id="TraesARI4D03G02462020.1">
    <property type="protein sequence ID" value="TraesARI4D03G02462020.1.CDS1"/>
    <property type="gene ID" value="TraesARI4D03G02462020"/>
</dbReference>
<dbReference type="EnsemblPlants" id="TraesARI4D03G02462020.2">
    <property type="protein sequence ID" value="TraesARI4D03G02462020.2.CDS1"/>
    <property type="gene ID" value="TraesARI4D03G02462020"/>
</dbReference>
<dbReference type="EnsemblPlants" id="TraesCAD_scaffold_027774_01G000100.1">
    <property type="protein sequence ID" value="TraesCAD_scaffold_027774_01G000100.1"/>
    <property type="gene ID" value="TraesCAD_scaffold_027774_01G000100"/>
</dbReference>
<dbReference type="EnsemblPlants" id="TraesCS4D02G040400.1">
    <property type="protein sequence ID" value="TraesCS4D02G040400.1.cds1"/>
    <property type="gene ID" value="TraesCS4D02G040400"/>
</dbReference>
<dbReference type="EnsemblPlants" id="TraesCS4D03G0067100.1">
    <property type="protein sequence ID" value="TraesCS4D03G0067100.1.CDS1"/>
    <property type="gene ID" value="TraesCS4D03G0067100"/>
</dbReference>
<dbReference type="EnsemblPlants" id="TraesJAG4D03G02420890.1">
    <property type="protein sequence ID" value="TraesJAG4D03G02420890.1.CDS1"/>
    <property type="gene ID" value="TraesJAG4D03G02420890"/>
</dbReference>
<dbReference type="EnsemblPlants" id="TraesJAG4D03G02420890.2">
    <property type="protein sequence ID" value="TraesJAG4D03G02420890.2.CDS1"/>
    <property type="gene ID" value="TraesJAG4D03G02420890"/>
</dbReference>
<dbReference type="EnsemblPlants" id="TraesKAR4D01G0014970.1">
    <property type="protein sequence ID" value="cds.TraesKAR4D01G0014970.1"/>
    <property type="gene ID" value="TraesKAR4D01G0014970"/>
</dbReference>
<dbReference type="EnsemblPlants" id="TraesLAC4D03G02376950.1">
    <property type="protein sequence ID" value="TraesLAC4D03G02376950.1.CDS1"/>
    <property type="gene ID" value="TraesLAC4D03G02376950"/>
</dbReference>
<dbReference type="EnsemblPlants" id="TraesLAC4D03G02376950.2">
    <property type="protein sequence ID" value="TraesLAC4D03G02376950.2.CDS1"/>
    <property type="gene ID" value="TraesLAC4D03G02376950"/>
</dbReference>
<dbReference type="EnsemblPlants" id="TraesLDM4D03G02425590.1">
    <property type="protein sequence ID" value="TraesLDM4D03G02425590.1.CDS1"/>
    <property type="gene ID" value="TraesLDM4D03G02425590"/>
</dbReference>
<dbReference type="EnsemblPlants" id="TraesLDM4D03G02425590.2">
    <property type="protein sequence ID" value="TraesLDM4D03G02425590.2.CDS1"/>
    <property type="gene ID" value="TraesLDM4D03G02425590"/>
</dbReference>
<dbReference type="EnsemblPlants" id="TraesPARA_EIv1.0_1415400.1">
    <property type="protein sequence ID" value="TraesPARA_EIv1.0_1415400.1.CDS1"/>
    <property type="gene ID" value="TraesPARA_EIv1.0_1415400"/>
</dbReference>
<dbReference type="EnsemblPlants" id="TraesPARA_EIv1.0_1415400.2">
    <property type="protein sequence ID" value="TraesPARA_EIv1.0_1415400.2.CDS1"/>
    <property type="gene ID" value="TraesPARA_EIv1.0_1415400"/>
</dbReference>
<dbReference type="EnsemblPlants" id="TraesROB_scaffold_023654_01G000100.1">
    <property type="protein sequence ID" value="TraesROB_scaffold_023654_01G000100.1"/>
    <property type="gene ID" value="TraesROB_scaffold_023654_01G000100"/>
</dbReference>
<dbReference type="EnsemblPlants" id="TraesSTA4D03G02418780.1">
    <property type="protein sequence ID" value="TraesSTA4D03G02418780.1.CDS1"/>
    <property type="gene ID" value="TraesSTA4D03G02418780"/>
</dbReference>
<dbReference type="EnsemblPlants" id="TraesSTA4D03G02418780.2">
    <property type="protein sequence ID" value="TraesSTA4D03G02418780.2.CDS1"/>
    <property type="gene ID" value="TraesSTA4D03G02418780"/>
</dbReference>
<dbReference type="EnsemblPlants" id="TraesSYM4D03G02450670.1">
    <property type="protein sequence ID" value="TraesSYM4D03G02450670.1.CDS1"/>
    <property type="gene ID" value="TraesSYM4D03G02450670"/>
</dbReference>
<dbReference type="EnsemblPlants" id="TraesSYM4D03G02450670.2">
    <property type="protein sequence ID" value="TraesSYM4D03G02450670.2.CDS1"/>
    <property type="gene ID" value="TraesSYM4D03G02450670"/>
</dbReference>
<dbReference type="EnsemblPlants" id="TraesWEE_scaffold_064278_01G000100.1">
    <property type="protein sequence ID" value="TraesWEE_scaffold_064278_01G000100.1"/>
    <property type="gene ID" value="TraesWEE_scaffold_064278_01G000100"/>
</dbReference>
<dbReference type="Gramene" id="TraesARI4D03G02462020.1">
    <property type="protein sequence ID" value="TraesARI4D03G02462020.1.CDS1"/>
    <property type="gene ID" value="TraesARI4D03G02462020"/>
</dbReference>
<dbReference type="Gramene" id="TraesARI4D03G02462020.2">
    <property type="protein sequence ID" value="TraesARI4D03G02462020.2.CDS1"/>
    <property type="gene ID" value="TraesARI4D03G02462020"/>
</dbReference>
<dbReference type="Gramene" id="TraesCAD_scaffold_027774_01G000100.1">
    <property type="protein sequence ID" value="TraesCAD_scaffold_027774_01G000100.1"/>
    <property type="gene ID" value="TraesCAD_scaffold_027774_01G000100"/>
</dbReference>
<dbReference type="Gramene" id="TraesCS4D02G040400.1">
    <property type="protein sequence ID" value="TraesCS4D02G040400.1.cds1"/>
    <property type="gene ID" value="TraesCS4D02G040400"/>
</dbReference>
<dbReference type="Gramene" id="TraesCS4D03G0067100.1">
    <property type="protein sequence ID" value="TraesCS4D03G0067100.1.CDS1"/>
    <property type="gene ID" value="TraesCS4D03G0067100"/>
</dbReference>
<dbReference type="Gramene" id="TraesJAG4D03G02420890.1">
    <property type="protein sequence ID" value="TraesJAG4D03G02420890.1.CDS1"/>
    <property type="gene ID" value="TraesJAG4D03G02420890"/>
</dbReference>
<dbReference type="Gramene" id="TraesJAG4D03G02420890.2">
    <property type="protein sequence ID" value="TraesJAG4D03G02420890.2.CDS1"/>
    <property type="gene ID" value="TraesJAG4D03G02420890"/>
</dbReference>
<dbReference type="Gramene" id="TraesKAR4D01G0014970.1">
    <property type="protein sequence ID" value="cds.TraesKAR4D01G0014970.1"/>
    <property type="gene ID" value="TraesKAR4D01G0014970"/>
</dbReference>
<dbReference type="Gramene" id="TraesLAC4D03G02376950.1">
    <property type="protein sequence ID" value="TraesLAC4D03G02376950.1.CDS1"/>
    <property type="gene ID" value="TraesLAC4D03G02376950"/>
</dbReference>
<dbReference type="Gramene" id="TraesLAC4D03G02376950.2">
    <property type="protein sequence ID" value="TraesLAC4D03G02376950.2.CDS1"/>
    <property type="gene ID" value="TraesLAC4D03G02376950"/>
</dbReference>
<dbReference type="Gramene" id="TraesLDM4D03G02425590.1">
    <property type="protein sequence ID" value="TraesLDM4D03G02425590.1.CDS1"/>
    <property type="gene ID" value="TraesLDM4D03G02425590"/>
</dbReference>
<dbReference type="Gramene" id="TraesLDM4D03G02425590.2">
    <property type="protein sequence ID" value="TraesLDM4D03G02425590.2.CDS1"/>
    <property type="gene ID" value="TraesLDM4D03G02425590"/>
</dbReference>
<dbReference type="Gramene" id="TraesPARA_EIv1.0_1415400.1">
    <property type="protein sequence ID" value="TraesPARA_EIv1.0_1415400.1.CDS1"/>
    <property type="gene ID" value="TraesPARA_EIv1.0_1415400"/>
</dbReference>
<dbReference type="Gramene" id="TraesPARA_EIv1.0_1415400.2">
    <property type="protein sequence ID" value="TraesPARA_EIv1.0_1415400.2.CDS1"/>
    <property type="gene ID" value="TraesPARA_EIv1.0_1415400"/>
</dbReference>
<dbReference type="Gramene" id="TraesROB_scaffold_023654_01G000100.1">
    <property type="protein sequence ID" value="TraesROB_scaffold_023654_01G000100.1"/>
    <property type="gene ID" value="TraesROB_scaffold_023654_01G000100"/>
</dbReference>
<dbReference type="Gramene" id="TraesSTA4D03G02418780.1">
    <property type="protein sequence ID" value="TraesSTA4D03G02418780.1.CDS1"/>
    <property type="gene ID" value="TraesSTA4D03G02418780"/>
</dbReference>
<dbReference type="Gramene" id="TraesSTA4D03G02418780.2">
    <property type="protein sequence ID" value="TraesSTA4D03G02418780.2.CDS1"/>
    <property type="gene ID" value="TraesSTA4D03G02418780"/>
</dbReference>
<dbReference type="Gramene" id="TraesSYM4D03G02450670.1">
    <property type="protein sequence ID" value="TraesSYM4D03G02450670.1.CDS1"/>
    <property type="gene ID" value="TraesSYM4D03G02450670"/>
</dbReference>
<dbReference type="Gramene" id="TraesSYM4D03G02450670.2">
    <property type="protein sequence ID" value="TraesSYM4D03G02450670.2.CDS1"/>
    <property type="gene ID" value="TraesSYM4D03G02450670"/>
</dbReference>
<dbReference type="Gramene" id="TraesWEE_scaffold_064278_01G000100.1">
    <property type="protein sequence ID" value="TraesWEE_scaffold_064278_01G000100.1"/>
    <property type="gene ID" value="TraesWEE_scaffold_064278_01G000100"/>
</dbReference>
<dbReference type="eggNOG" id="ENOG502QPMG">
    <property type="taxonomic scope" value="Eukaryota"/>
</dbReference>
<dbReference type="OMA" id="AQWRIRM"/>
<dbReference type="OrthoDB" id="761920at2759"/>
<dbReference type="Proteomes" id="UP000019116">
    <property type="component" value="Chromosome 4D"/>
</dbReference>
<dbReference type="ExpressionAtlas" id="Q9ST59">
    <property type="expression patterns" value="baseline and differential"/>
</dbReference>
<dbReference type="GO" id="GO:0005634">
    <property type="term" value="C:nucleus"/>
    <property type="evidence" value="ECO:0000318"/>
    <property type="project" value="GO_Central"/>
</dbReference>
<dbReference type="GO" id="GO:0003700">
    <property type="term" value="F:DNA-binding transcription factor activity"/>
    <property type="evidence" value="ECO:0000318"/>
    <property type="project" value="GO_Central"/>
</dbReference>
<dbReference type="GO" id="GO:0043565">
    <property type="term" value="F:sequence-specific DNA binding"/>
    <property type="evidence" value="ECO:0000318"/>
    <property type="project" value="GO_Central"/>
</dbReference>
<dbReference type="GO" id="GO:0009740">
    <property type="term" value="P:gibberellic acid mediated signaling pathway"/>
    <property type="evidence" value="ECO:0007669"/>
    <property type="project" value="UniProtKB-KW"/>
</dbReference>
<dbReference type="GO" id="GO:0006355">
    <property type="term" value="P:regulation of DNA-templated transcription"/>
    <property type="evidence" value="ECO:0000318"/>
    <property type="project" value="GO_Central"/>
</dbReference>
<dbReference type="FunFam" id="1.10.10.1290:FF:000001">
    <property type="entry name" value="DELLA protein GAI"/>
    <property type="match status" value="1"/>
</dbReference>
<dbReference type="Gene3D" id="1.10.10.1290">
    <property type="entry name" value="Transcriptional regulator DELLA, N-terminal domain"/>
    <property type="match status" value="1"/>
</dbReference>
<dbReference type="InterPro" id="IPR038088">
    <property type="entry name" value="DELLA_N_sf"/>
</dbReference>
<dbReference type="InterPro" id="IPR021914">
    <property type="entry name" value="TF_DELLA_N"/>
</dbReference>
<dbReference type="InterPro" id="IPR005202">
    <property type="entry name" value="TF_GRAS"/>
</dbReference>
<dbReference type="PANTHER" id="PTHR31636">
    <property type="entry name" value="OSJNBA0084A10.13 PROTEIN-RELATED"/>
    <property type="match status" value="1"/>
</dbReference>
<dbReference type="Pfam" id="PF12041">
    <property type="entry name" value="DELLA"/>
    <property type="match status" value="1"/>
</dbReference>
<dbReference type="Pfam" id="PF03514">
    <property type="entry name" value="GRAS"/>
    <property type="match status" value="1"/>
</dbReference>
<dbReference type="SMART" id="SM01129">
    <property type="entry name" value="DELLA"/>
    <property type="match status" value="1"/>
</dbReference>
<dbReference type="PROSITE" id="PS50985">
    <property type="entry name" value="GRAS"/>
    <property type="match status" value="1"/>
</dbReference>
<evidence type="ECO:0000250" key="1"/>
<evidence type="ECO:0000255" key="2">
    <source>
        <dbReference type="PROSITE-ProRule" id="PRU01191"/>
    </source>
</evidence>
<evidence type="ECO:0000256" key="3">
    <source>
        <dbReference type="SAM" id="MobiDB-lite"/>
    </source>
</evidence>
<evidence type="ECO:0000305" key="4"/>